<proteinExistence type="inferred from homology"/>
<name>CHED2_GEOMG</name>
<dbReference type="EC" id="3.5.1.44" evidence="1"/>
<dbReference type="EMBL" id="CP000148">
    <property type="protein sequence ID" value="ABB33422.1"/>
    <property type="molecule type" value="Genomic_DNA"/>
</dbReference>
<dbReference type="RefSeq" id="WP_004512647.1">
    <property type="nucleotide sequence ID" value="NC_007517.1"/>
</dbReference>
<dbReference type="SMR" id="Q39QQ2"/>
<dbReference type="STRING" id="269799.Gmet_3209"/>
<dbReference type="KEGG" id="gme:Gmet_3209"/>
<dbReference type="eggNOG" id="COG1871">
    <property type="taxonomic scope" value="Bacteria"/>
</dbReference>
<dbReference type="HOGENOM" id="CLU_087854_2_0_7"/>
<dbReference type="Proteomes" id="UP000007073">
    <property type="component" value="Chromosome"/>
</dbReference>
<dbReference type="GO" id="GO:0050568">
    <property type="term" value="F:protein-glutamine glutaminase activity"/>
    <property type="evidence" value="ECO:0007669"/>
    <property type="project" value="UniProtKB-UniRule"/>
</dbReference>
<dbReference type="GO" id="GO:0006935">
    <property type="term" value="P:chemotaxis"/>
    <property type="evidence" value="ECO:0007669"/>
    <property type="project" value="UniProtKB-UniRule"/>
</dbReference>
<dbReference type="CDD" id="cd16352">
    <property type="entry name" value="CheD"/>
    <property type="match status" value="1"/>
</dbReference>
<dbReference type="Gene3D" id="3.30.1330.200">
    <property type="match status" value="1"/>
</dbReference>
<dbReference type="HAMAP" id="MF_01440">
    <property type="entry name" value="CheD"/>
    <property type="match status" value="1"/>
</dbReference>
<dbReference type="InterPro" id="IPR038592">
    <property type="entry name" value="CheD-like_sf"/>
</dbReference>
<dbReference type="InterPro" id="IPR005659">
    <property type="entry name" value="Chemorcpt_Glu_NH3ase_CheD"/>
</dbReference>
<dbReference type="InterPro" id="IPR011324">
    <property type="entry name" value="Cytotoxic_necrot_fac-like_cat"/>
</dbReference>
<dbReference type="PANTHER" id="PTHR35147">
    <property type="entry name" value="CHEMORECEPTOR GLUTAMINE DEAMIDASE CHED-RELATED"/>
    <property type="match status" value="1"/>
</dbReference>
<dbReference type="PANTHER" id="PTHR35147:SF1">
    <property type="entry name" value="CHEMORECEPTOR GLUTAMINE DEAMIDASE CHED-RELATED"/>
    <property type="match status" value="1"/>
</dbReference>
<dbReference type="Pfam" id="PF03975">
    <property type="entry name" value="CheD"/>
    <property type="match status" value="1"/>
</dbReference>
<dbReference type="SUPFAM" id="SSF64438">
    <property type="entry name" value="CNF1/YfiH-like putative cysteine hydrolases"/>
    <property type="match status" value="1"/>
</dbReference>
<reference key="1">
    <citation type="journal article" date="2009" name="BMC Microbiol.">
        <title>The genome sequence of Geobacter metallireducens: features of metabolism, physiology and regulation common and dissimilar to Geobacter sulfurreducens.</title>
        <authorList>
            <person name="Aklujkar M."/>
            <person name="Krushkal J."/>
            <person name="DiBartolo G."/>
            <person name="Lapidus A."/>
            <person name="Land M.L."/>
            <person name="Lovley D.R."/>
        </authorList>
    </citation>
    <scope>NUCLEOTIDE SEQUENCE [LARGE SCALE GENOMIC DNA]</scope>
    <source>
        <strain>ATCC 53774 / DSM 7210 / GS-15</strain>
    </source>
</reference>
<gene>
    <name evidence="1" type="primary">cheD2</name>
    <name type="ordered locus">Gmet_3209</name>
</gene>
<organism>
    <name type="scientific">Geobacter metallireducens (strain ATCC 53774 / DSM 7210 / GS-15)</name>
    <dbReference type="NCBI Taxonomy" id="269799"/>
    <lineage>
        <taxon>Bacteria</taxon>
        <taxon>Pseudomonadati</taxon>
        <taxon>Thermodesulfobacteriota</taxon>
        <taxon>Desulfuromonadia</taxon>
        <taxon>Geobacterales</taxon>
        <taxon>Geobacteraceae</taxon>
        <taxon>Geobacter</taxon>
    </lineage>
</organism>
<sequence>MSKIISVGISEHKVASDPVVLVTYGLGSCVGIALYDPEVRIGGLAHTLLPAPVREVQGAERTAKFTCWAVDLMVEELLKCGCAPERLVAKLAGGATMFEPQYRSAHGGIGERNVAAAREALERSGIPLVAEDTGGDYGRSLEFNTATGIIMVRALQQPIKQL</sequence>
<accession>Q39QQ2</accession>
<evidence type="ECO:0000255" key="1">
    <source>
        <dbReference type="HAMAP-Rule" id="MF_01440"/>
    </source>
</evidence>
<feature type="chain" id="PRO_0000251034" description="Probable chemoreceptor glutamine deamidase CheD 2">
    <location>
        <begin position="1"/>
        <end position="162"/>
    </location>
</feature>
<keyword id="KW-0145">Chemotaxis</keyword>
<keyword id="KW-0378">Hydrolase</keyword>
<keyword id="KW-1185">Reference proteome</keyword>
<protein>
    <recommendedName>
        <fullName evidence="1">Probable chemoreceptor glutamine deamidase CheD 2</fullName>
        <ecNumber evidence="1">3.5.1.44</ecNumber>
    </recommendedName>
</protein>
<comment type="function">
    <text evidence="1">Probably deamidates glutamine residues to glutamate on methyl-accepting chemotaxis receptors (MCPs), playing an important role in chemotaxis.</text>
</comment>
<comment type="catalytic activity">
    <reaction evidence="1">
        <text>L-glutaminyl-[protein] + H2O = L-glutamyl-[protein] + NH4(+)</text>
        <dbReference type="Rhea" id="RHEA:16441"/>
        <dbReference type="Rhea" id="RHEA-COMP:10207"/>
        <dbReference type="Rhea" id="RHEA-COMP:10208"/>
        <dbReference type="ChEBI" id="CHEBI:15377"/>
        <dbReference type="ChEBI" id="CHEBI:28938"/>
        <dbReference type="ChEBI" id="CHEBI:29973"/>
        <dbReference type="ChEBI" id="CHEBI:30011"/>
        <dbReference type="EC" id="3.5.1.44"/>
    </reaction>
</comment>
<comment type="similarity">
    <text evidence="1">Belongs to the CheD family.</text>
</comment>